<protein>
    <recommendedName>
        <fullName evidence="1">tRNA N6-adenosine threonylcarbamoyltransferase</fullName>
        <ecNumber evidence="1">2.3.1.234</ecNumber>
    </recommendedName>
    <alternativeName>
        <fullName evidence="1">N6-L-threonylcarbamoyladenine synthase</fullName>
        <shortName evidence="1">t(6)A synthase</shortName>
    </alternativeName>
    <alternativeName>
        <fullName evidence="1">t(6)A37 threonylcarbamoyladenosine biosynthesis protein TsaD</fullName>
    </alternativeName>
    <alternativeName>
        <fullName evidence="1">tRNA threonylcarbamoyladenosine biosynthesis protein TsaD</fullName>
    </alternativeName>
</protein>
<keyword id="KW-0012">Acyltransferase</keyword>
<keyword id="KW-0963">Cytoplasm</keyword>
<keyword id="KW-0408">Iron</keyword>
<keyword id="KW-0479">Metal-binding</keyword>
<keyword id="KW-1185">Reference proteome</keyword>
<keyword id="KW-0808">Transferase</keyword>
<keyword id="KW-0819">tRNA processing</keyword>
<evidence type="ECO:0000255" key="1">
    <source>
        <dbReference type="HAMAP-Rule" id="MF_01445"/>
    </source>
</evidence>
<gene>
    <name evidence="1" type="primary">tsaD</name>
    <name type="synonym">gcp</name>
    <name type="ordered locus">Mlg_2520</name>
</gene>
<accession>Q0A5M7</accession>
<reference key="1">
    <citation type="submission" date="2006-08" db="EMBL/GenBank/DDBJ databases">
        <title>Complete sequence of Alkalilimnicola ehrilichei MLHE-1.</title>
        <authorList>
            <person name="Copeland A."/>
            <person name="Lucas S."/>
            <person name="Lapidus A."/>
            <person name="Barry K."/>
            <person name="Detter J.C."/>
            <person name="Glavina del Rio T."/>
            <person name="Hammon N."/>
            <person name="Israni S."/>
            <person name="Dalin E."/>
            <person name="Tice H."/>
            <person name="Pitluck S."/>
            <person name="Sims D."/>
            <person name="Brettin T."/>
            <person name="Bruce D."/>
            <person name="Han C."/>
            <person name="Tapia R."/>
            <person name="Gilna P."/>
            <person name="Schmutz J."/>
            <person name="Larimer F."/>
            <person name="Land M."/>
            <person name="Hauser L."/>
            <person name="Kyrpides N."/>
            <person name="Mikhailova N."/>
            <person name="Oremland R.S."/>
            <person name="Hoeft S.E."/>
            <person name="Switzer-Blum J."/>
            <person name="Kulp T."/>
            <person name="King G."/>
            <person name="Tabita R."/>
            <person name="Witte B."/>
            <person name="Santini J.M."/>
            <person name="Basu P."/>
            <person name="Hollibaugh J.T."/>
            <person name="Xie G."/>
            <person name="Stolz J.F."/>
            <person name="Richardson P."/>
        </authorList>
    </citation>
    <scope>NUCLEOTIDE SEQUENCE [LARGE SCALE GENOMIC DNA]</scope>
    <source>
        <strain>ATCC BAA-1101 / DSM 17681 / MLHE-1</strain>
    </source>
</reference>
<comment type="function">
    <text evidence="1">Required for the formation of a threonylcarbamoyl group on adenosine at position 37 (t(6)A37) in tRNAs that read codons beginning with adenine. Is involved in the transfer of the threonylcarbamoyl moiety of threonylcarbamoyl-AMP (TC-AMP) to the N6 group of A37, together with TsaE and TsaB. TsaD likely plays a direct catalytic role in this reaction.</text>
</comment>
<comment type="catalytic activity">
    <reaction evidence="1">
        <text>L-threonylcarbamoyladenylate + adenosine(37) in tRNA = N(6)-L-threonylcarbamoyladenosine(37) in tRNA + AMP + H(+)</text>
        <dbReference type="Rhea" id="RHEA:37059"/>
        <dbReference type="Rhea" id="RHEA-COMP:10162"/>
        <dbReference type="Rhea" id="RHEA-COMP:10163"/>
        <dbReference type="ChEBI" id="CHEBI:15378"/>
        <dbReference type="ChEBI" id="CHEBI:73682"/>
        <dbReference type="ChEBI" id="CHEBI:74411"/>
        <dbReference type="ChEBI" id="CHEBI:74418"/>
        <dbReference type="ChEBI" id="CHEBI:456215"/>
        <dbReference type="EC" id="2.3.1.234"/>
    </reaction>
</comment>
<comment type="cofactor">
    <cofactor evidence="1">
        <name>Fe(2+)</name>
        <dbReference type="ChEBI" id="CHEBI:29033"/>
    </cofactor>
    <text evidence="1">Binds 1 Fe(2+) ion per subunit.</text>
</comment>
<comment type="subcellular location">
    <subcellularLocation>
        <location evidence="1">Cytoplasm</location>
    </subcellularLocation>
</comment>
<comment type="similarity">
    <text evidence="1">Belongs to the KAE1 / TsaD family.</text>
</comment>
<dbReference type="EC" id="2.3.1.234" evidence="1"/>
<dbReference type="EMBL" id="CP000453">
    <property type="protein sequence ID" value="ABI57860.1"/>
    <property type="molecule type" value="Genomic_DNA"/>
</dbReference>
<dbReference type="RefSeq" id="WP_011630253.1">
    <property type="nucleotide sequence ID" value="NC_008340.1"/>
</dbReference>
<dbReference type="SMR" id="Q0A5M7"/>
<dbReference type="KEGG" id="aeh:Mlg_2520"/>
<dbReference type="eggNOG" id="COG0533">
    <property type="taxonomic scope" value="Bacteria"/>
</dbReference>
<dbReference type="HOGENOM" id="CLU_023208_0_2_6"/>
<dbReference type="OrthoDB" id="9806197at2"/>
<dbReference type="Proteomes" id="UP000001962">
    <property type="component" value="Chromosome"/>
</dbReference>
<dbReference type="GO" id="GO:0005737">
    <property type="term" value="C:cytoplasm"/>
    <property type="evidence" value="ECO:0007669"/>
    <property type="project" value="UniProtKB-SubCell"/>
</dbReference>
<dbReference type="GO" id="GO:0005506">
    <property type="term" value="F:iron ion binding"/>
    <property type="evidence" value="ECO:0007669"/>
    <property type="project" value="UniProtKB-UniRule"/>
</dbReference>
<dbReference type="GO" id="GO:0061711">
    <property type="term" value="F:N(6)-L-threonylcarbamoyladenine synthase activity"/>
    <property type="evidence" value="ECO:0007669"/>
    <property type="project" value="UniProtKB-EC"/>
</dbReference>
<dbReference type="GO" id="GO:0002949">
    <property type="term" value="P:tRNA threonylcarbamoyladenosine modification"/>
    <property type="evidence" value="ECO:0007669"/>
    <property type="project" value="UniProtKB-UniRule"/>
</dbReference>
<dbReference type="CDD" id="cd24133">
    <property type="entry name" value="ASKHA_NBD_TsaD_bac"/>
    <property type="match status" value="1"/>
</dbReference>
<dbReference type="FunFam" id="3.30.420.40:FF:000040">
    <property type="entry name" value="tRNA N6-adenosine threonylcarbamoyltransferase"/>
    <property type="match status" value="1"/>
</dbReference>
<dbReference type="Gene3D" id="3.30.420.40">
    <property type="match status" value="2"/>
</dbReference>
<dbReference type="HAMAP" id="MF_01445">
    <property type="entry name" value="TsaD"/>
    <property type="match status" value="1"/>
</dbReference>
<dbReference type="InterPro" id="IPR043129">
    <property type="entry name" value="ATPase_NBD"/>
</dbReference>
<dbReference type="InterPro" id="IPR000905">
    <property type="entry name" value="Gcp-like_dom"/>
</dbReference>
<dbReference type="InterPro" id="IPR017861">
    <property type="entry name" value="KAE1/TsaD"/>
</dbReference>
<dbReference type="InterPro" id="IPR017860">
    <property type="entry name" value="Peptidase_M22_CS"/>
</dbReference>
<dbReference type="InterPro" id="IPR022450">
    <property type="entry name" value="TsaD"/>
</dbReference>
<dbReference type="NCBIfam" id="TIGR00329">
    <property type="entry name" value="gcp_kae1"/>
    <property type="match status" value="1"/>
</dbReference>
<dbReference type="NCBIfam" id="TIGR03723">
    <property type="entry name" value="T6A_TsaD_YgjD"/>
    <property type="match status" value="1"/>
</dbReference>
<dbReference type="PANTHER" id="PTHR11735">
    <property type="entry name" value="TRNA N6-ADENOSINE THREONYLCARBAMOYLTRANSFERASE"/>
    <property type="match status" value="1"/>
</dbReference>
<dbReference type="PANTHER" id="PTHR11735:SF6">
    <property type="entry name" value="TRNA N6-ADENOSINE THREONYLCARBAMOYLTRANSFERASE, MITOCHONDRIAL"/>
    <property type="match status" value="1"/>
</dbReference>
<dbReference type="Pfam" id="PF00814">
    <property type="entry name" value="TsaD"/>
    <property type="match status" value="1"/>
</dbReference>
<dbReference type="PRINTS" id="PR00789">
    <property type="entry name" value="OSIALOPTASE"/>
</dbReference>
<dbReference type="SUPFAM" id="SSF53067">
    <property type="entry name" value="Actin-like ATPase domain"/>
    <property type="match status" value="2"/>
</dbReference>
<dbReference type="PROSITE" id="PS01016">
    <property type="entry name" value="GLYCOPROTEASE"/>
    <property type="match status" value="1"/>
</dbReference>
<name>TSAD_ALKEH</name>
<feature type="chain" id="PRO_0000303251" description="tRNA N6-adenosine threonylcarbamoyltransferase">
    <location>
        <begin position="1"/>
        <end position="339"/>
    </location>
</feature>
<feature type="binding site" evidence="1">
    <location>
        <position position="111"/>
    </location>
    <ligand>
        <name>Fe cation</name>
        <dbReference type="ChEBI" id="CHEBI:24875"/>
    </ligand>
</feature>
<feature type="binding site" evidence="1">
    <location>
        <position position="115"/>
    </location>
    <ligand>
        <name>Fe cation</name>
        <dbReference type="ChEBI" id="CHEBI:24875"/>
    </ligand>
</feature>
<feature type="binding site" evidence="1">
    <location>
        <begin position="134"/>
        <end position="138"/>
    </location>
    <ligand>
        <name>substrate</name>
    </ligand>
</feature>
<feature type="binding site" evidence="1">
    <location>
        <position position="167"/>
    </location>
    <ligand>
        <name>substrate</name>
    </ligand>
</feature>
<feature type="binding site" evidence="1">
    <location>
        <position position="180"/>
    </location>
    <ligand>
        <name>substrate</name>
    </ligand>
</feature>
<feature type="binding site" evidence="1">
    <location>
        <position position="270"/>
    </location>
    <ligand>
        <name>substrate</name>
    </ligand>
</feature>
<feature type="binding site" evidence="1">
    <location>
        <position position="298"/>
    </location>
    <ligand>
        <name>Fe cation</name>
        <dbReference type="ChEBI" id="CHEBI:24875"/>
    </ligand>
</feature>
<proteinExistence type="inferred from homology"/>
<organism>
    <name type="scientific">Alkalilimnicola ehrlichii (strain ATCC BAA-1101 / DSM 17681 / MLHE-1)</name>
    <dbReference type="NCBI Taxonomy" id="187272"/>
    <lineage>
        <taxon>Bacteria</taxon>
        <taxon>Pseudomonadati</taxon>
        <taxon>Pseudomonadota</taxon>
        <taxon>Gammaproteobacteria</taxon>
        <taxon>Chromatiales</taxon>
        <taxon>Ectothiorhodospiraceae</taxon>
        <taxon>Alkalilimnicola</taxon>
    </lineage>
</organism>
<sequence length="339" mass="36059">MRVLGVESSCDETGLAIYDSAQGLMAHALHSQVATHAEYGGVVPELASRDHVRRVVPLTRRVLAEAGCRLRDIDAVAYTRGPGLVGALMVGAGMARSLAWGLGVPALGVHHMEAHLLAPMLEPNPPAFPFVALLVSGGHTLLVQVAGVGRYRVLGETLDDAAGEAFDKTAKLLGLPYPGGPELEKLAESGDPGRYRFPRPMTDRPGLDFSFSGLKTRVLQTVQQSREADRADIAAAFQSAVVDTLVIKCRRALRATGSQRLVISGGVGANGLLREQMRAMADQAGASLHYPRLALCTDNGAMVAYTGWCRLSEGQHDDLDFSVTARWPLADLTPPGQPV</sequence>